<organism>
    <name type="scientific">Treponema pallidum (strain Nichols)</name>
    <dbReference type="NCBI Taxonomy" id="243276"/>
    <lineage>
        <taxon>Bacteria</taxon>
        <taxon>Pseudomonadati</taxon>
        <taxon>Spirochaetota</taxon>
        <taxon>Spirochaetia</taxon>
        <taxon>Spirochaetales</taxon>
        <taxon>Treponemataceae</taxon>
        <taxon>Treponema</taxon>
    </lineage>
</organism>
<gene>
    <name type="primary">fliI</name>
    <name type="ordered locus">TP_0402</name>
</gene>
<feature type="chain" id="PRO_0000144699" description="Flagellum-specific ATP synthase">
    <location>
        <begin position="1"/>
        <end position="447"/>
    </location>
</feature>
<feature type="binding site" evidence="2">
    <location>
        <begin position="167"/>
        <end position="174"/>
    </location>
    <ligand>
        <name>ATP</name>
        <dbReference type="ChEBI" id="CHEBI:30616"/>
    </ligand>
</feature>
<evidence type="ECO:0000250" key="1"/>
<evidence type="ECO:0000255" key="2"/>
<evidence type="ECO:0000255" key="3">
    <source>
        <dbReference type="PROSITE-ProRule" id="PRU10106"/>
    </source>
</evidence>
<evidence type="ECO:0000305" key="4"/>
<proteinExistence type="inferred from homology"/>
<reference key="1">
    <citation type="journal article" date="1998" name="Science">
        <title>Complete genome sequence of Treponema pallidum, the syphilis spirochete.</title>
        <authorList>
            <person name="Fraser C.M."/>
            <person name="Norris S.J."/>
            <person name="Weinstock G.M."/>
            <person name="White O."/>
            <person name="Sutton G.G."/>
            <person name="Dodson R.J."/>
            <person name="Gwinn M.L."/>
            <person name="Hickey E.K."/>
            <person name="Clayton R.A."/>
            <person name="Ketchum K.A."/>
            <person name="Sodergren E."/>
            <person name="Hardham J.M."/>
            <person name="McLeod M.P."/>
            <person name="Salzberg S.L."/>
            <person name="Peterson J.D."/>
            <person name="Khalak H.G."/>
            <person name="Richardson D.L."/>
            <person name="Howell J.K."/>
            <person name="Chidambaram M."/>
            <person name="Utterback T.R."/>
            <person name="McDonald L.A."/>
            <person name="Artiach P."/>
            <person name="Bowman C."/>
            <person name="Cotton M.D."/>
            <person name="Fujii C."/>
            <person name="Garland S.A."/>
            <person name="Hatch B."/>
            <person name="Horst K."/>
            <person name="Roberts K.M."/>
            <person name="Sandusky M."/>
            <person name="Weidman J.F."/>
            <person name="Smith H.O."/>
            <person name="Venter J.C."/>
        </authorList>
    </citation>
    <scope>NUCLEOTIDE SEQUENCE [LARGE SCALE GENOMIC DNA]</scope>
    <source>
        <strain>Nichols</strain>
    </source>
</reference>
<dbReference type="EC" id="7.1.2.2"/>
<dbReference type="EMBL" id="AE000520">
    <property type="protein sequence ID" value="AAC65390.1"/>
    <property type="molecule type" value="Genomic_DNA"/>
</dbReference>
<dbReference type="PIR" id="A71329">
    <property type="entry name" value="A71329"/>
</dbReference>
<dbReference type="RefSeq" id="WP_010881850.1">
    <property type="nucleotide sequence ID" value="NC_021490.2"/>
</dbReference>
<dbReference type="SMR" id="O83417"/>
<dbReference type="IntAct" id="O83417">
    <property type="interactions" value="4"/>
</dbReference>
<dbReference type="STRING" id="243276.TP_0402"/>
<dbReference type="EnsemblBacteria" id="AAC65390">
    <property type="protein sequence ID" value="AAC65390"/>
    <property type="gene ID" value="TP_0402"/>
</dbReference>
<dbReference type="GeneID" id="93876176"/>
<dbReference type="KEGG" id="tpa:TP_0402"/>
<dbReference type="KEGG" id="tpw:TPANIC_0402"/>
<dbReference type="eggNOG" id="COG1157">
    <property type="taxonomic scope" value="Bacteria"/>
</dbReference>
<dbReference type="HOGENOM" id="CLU_022398_5_1_12"/>
<dbReference type="OrthoDB" id="9802718at2"/>
<dbReference type="Proteomes" id="UP000000811">
    <property type="component" value="Chromosome"/>
</dbReference>
<dbReference type="GO" id="GO:0009288">
    <property type="term" value="C:bacterial-type flagellum"/>
    <property type="evidence" value="ECO:0007669"/>
    <property type="project" value="InterPro"/>
</dbReference>
<dbReference type="GO" id="GO:0005737">
    <property type="term" value="C:cytoplasm"/>
    <property type="evidence" value="ECO:0007669"/>
    <property type="project" value="UniProtKB-SubCell"/>
</dbReference>
<dbReference type="GO" id="GO:0030257">
    <property type="term" value="C:type III protein secretion system complex"/>
    <property type="evidence" value="ECO:0007669"/>
    <property type="project" value="InterPro"/>
</dbReference>
<dbReference type="GO" id="GO:0005524">
    <property type="term" value="F:ATP binding"/>
    <property type="evidence" value="ECO:0007669"/>
    <property type="project" value="UniProtKB-KW"/>
</dbReference>
<dbReference type="GO" id="GO:0016887">
    <property type="term" value="F:ATP hydrolysis activity"/>
    <property type="evidence" value="ECO:0007669"/>
    <property type="project" value="InterPro"/>
</dbReference>
<dbReference type="GO" id="GO:0046933">
    <property type="term" value="F:proton-transporting ATP synthase activity, rotational mechanism"/>
    <property type="evidence" value="ECO:0007669"/>
    <property type="project" value="TreeGrafter"/>
</dbReference>
<dbReference type="GO" id="GO:0044781">
    <property type="term" value="P:bacterial-type flagellum organization"/>
    <property type="evidence" value="ECO:0007669"/>
    <property type="project" value="UniProtKB-KW"/>
</dbReference>
<dbReference type="GO" id="GO:0030254">
    <property type="term" value="P:protein secretion by the type III secretion system"/>
    <property type="evidence" value="ECO:0007669"/>
    <property type="project" value="InterPro"/>
</dbReference>
<dbReference type="CDD" id="cd18114">
    <property type="entry name" value="ATP-synt_flagellum-secretory_path_III_C"/>
    <property type="match status" value="1"/>
</dbReference>
<dbReference type="CDD" id="cd18117">
    <property type="entry name" value="ATP-synt_flagellum-secretory_path_III_N"/>
    <property type="match status" value="1"/>
</dbReference>
<dbReference type="CDD" id="cd01136">
    <property type="entry name" value="ATPase_flagellum-secretory_path_III"/>
    <property type="match status" value="1"/>
</dbReference>
<dbReference type="FunFam" id="3.40.50.12240:FF:000002">
    <property type="entry name" value="Flagellum-specific ATP synthase FliI"/>
    <property type="match status" value="1"/>
</dbReference>
<dbReference type="Gene3D" id="3.40.50.12240">
    <property type="match status" value="1"/>
</dbReference>
<dbReference type="InterPro" id="IPR003593">
    <property type="entry name" value="AAA+_ATPase"/>
</dbReference>
<dbReference type="InterPro" id="IPR020003">
    <property type="entry name" value="ATPase_a/bsu_AS"/>
</dbReference>
<dbReference type="InterPro" id="IPR050053">
    <property type="entry name" value="ATPase_alpha/beta_chains"/>
</dbReference>
<dbReference type="InterPro" id="IPR004100">
    <property type="entry name" value="ATPase_F1/V1/A1_a/bsu_N"/>
</dbReference>
<dbReference type="InterPro" id="IPR000194">
    <property type="entry name" value="ATPase_F1/V1/A1_a/bsu_nucl-bd"/>
</dbReference>
<dbReference type="InterPro" id="IPR005714">
    <property type="entry name" value="ATPase_T3SS_FliI/YscN"/>
</dbReference>
<dbReference type="InterPro" id="IPR022426">
    <property type="entry name" value="FliI_clade3"/>
</dbReference>
<dbReference type="InterPro" id="IPR027417">
    <property type="entry name" value="P-loop_NTPase"/>
</dbReference>
<dbReference type="InterPro" id="IPR040627">
    <property type="entry name" value="T3SS_ATPase_C"/>
</dbReference>
<dbReference type="NCBIfam" id="TIGR03498">
    <property type="entry name" value="FliI_clade3"/>
    <property type="match status" value="1"/>
</dbReference>
<dbReference type="NCBIfam" id="TIGR01026">
    <property type="entry name" value="fliI_yscN"/>
    <property type="match status" value="1"/>
</dbReference>
<dbReference type="PANTHER" id="PTHR15184">
    <property type="entry name" value="ATP SYNTHASE"/>
    <property type="match status" value="1"/>
</dbReference>
<dbReference type="PANTHER" id="PTHR15184:SF9">
    <property type="entry name" value="SPI-1 TYPE 3 SECRETION SYSTEM ATPASE"/>
    <property type="match status" value="1"/>
</dbReference>
<dbReference type="Pfam" id="PF00006">
    <property type="entry name" value="ATP-synt_ab"/>
    <property type="match status" value="1"/>
</dbReference>
<dbReference type="Pfam" id="PF02874">
    <property type="entry name" value="ATP-synt_ab_N"/>
    <property type="match status" value="1"/>
</dbReference>
<dbReference type="Pfam" id="PF18269">
    <property type="entry name" value="T3SS_ATPase_C"/>
    <property type="match status" value="1"/>
</dbReference>
<dbReference type="SMART" id="SM00382">
    <property type="entry name" value="AAA"/>
    <property type="match status" value="1"/>
</dbReference>
<dbReference type="SUPFAM" id="SSF52540">
    <property type="entry name" value="P-loop containing nucleoside triphosphate hydrolases"/>
    <property type="match status" value="1"/>
</dbReference>
<dbReference type="PROSITE" id="PS00152">
    <property type="entry name" value="ATPASE_ALPHA_BETA"/>
    <property type="match status" value="1"/>
</dbReference>
<name>FLII_TREPA</name>
<protein>
    <recommendedName>
        <fullName>Flagellum-specific ATP synthase</fullName>
        <ecNumber>7.1.2.2</ecNumber>
    </recommendedName>
</protein>
<keyword id="KW-0066">ATP synthesis</keyword>
<keyword id="KW-0067">ATP-binding</keyword>
<keyword id="KW-1005">Bacterial flagellum biogenesis</keyword>
<keyword id="KW-1006">Bacterial flagellum protein export</keyword>
<keyword id="KW-0963">Cytoplasm</keyword>
<keyword id="KW-0375">Hydrogen ion transport</keyword>
<keyword id="KW-0406">Ion transport</keyword>
<keyword id="KW-0547">Nucleotide-binding</keyword>
<keyword id="KW-0653">Protein transport</keyword>
<keyword id="KW-1185">Reference proteome</keyword>
<keyword id="KW-1278">Translocase</keyword>
<keyword id="KW-0813">Transport</keyword>
<sequence>MEADLLCKYEVALRESEPVKYVGHVTAVRGLLIESRGPHAVVGELCRIVLRRQGRPLIAEVVGLAGSTVKLMSYTDTHGVEVGCAVVAEGAALSVPVGDALLGRVLNAFGKAIDGKGEIYAPLRSEVLRASSNPMERLPITRQMVTGVRVLDSLLAVGCGQRLGIFSGSGVGKSTLMGMIARNTDADVSVIALIGERGREVMDFVAHDLGPEGLKRSVIVSATSDESPLARVRGAYTATAIAEYFRDQGKQVLLLFDSLTRFAKAQREIGLASGELPATRGYTPGVFETLPKLLERAGSFSMGSVTAFYTVLVDGDDLDEPISDAVRGIVDGHIVLSRALAQRNHYPAIDVLQSVSRLAHRVLGADMKEAVRIVRRALAVYAEVEDLVRVGAYQQGSDAELDRAIAMRAELERFLTQGAQERVRFQDTVTSLSMLTGLSIAQPPSGV</sequence>
<comment type="function">
    <text evidence="1">Probable catalytic subunit of a protein translocase for flagellum-specific export, or a proton translocase involved in local circuits at the flagellum.</text>
</comment>
<comment type="catalytic activity">
    <reaction evidence="3">
        <text>ATP + H2O + 4 H(+)(in) = ADP + phosphate + 5 H(+)(out)</text>
        <dbReference type="Rhea" id="RHEA:57720"/>
        <dbReference type="ChEBI" id="CHEBI:15377"/>
        <dbReference type="ChEBI" id="CHEBI:15378"/>
        <dbReference type="ChEBI" id="CHEBI:30616"/>
        <dbReference type="ChEBI" id="CHEBI:43474"/>
        <dbReference type="ChEBI" id="CHEBI:456216"/>
        <dbReference type="EC" id="7.1.2.2"/>
    </reaction>
</comment>
<comment type="subcellular location">
    <subcellularLocation>
        <location evidence="4">Cytoplasm</location>
    </subcellularLocation>
</comment>
<comment type="similarity">
    <text evidence="4">Belongs to the ATPase alpha/beta chains family.</text>
</comment>
<accession>O83417</accession>